<gene>
    <name evidence="1" type="primary">ilvC</name>
    <name type="ordered locus">TRQ2_0387</name>
</gene>
<evidence type="ECO:0000255" key="1">
    <source>
        <dbReference type="HAMAP-Rule" id="MF_00435"/>
    </source>
</evidence>
<evidence type="ECO:0000255" key="2">
    <source>
        <dbReference type="PROSITE-ProRule" id="PRU01197"/>
    </source>
</evidence>
<evidence type="ECO:0000255" key="3">
    <source>
        <dbReference type="PROSITE-ProRule" id="PRU01198"/>
    </source>
</evidence>
<dbReference type="EC" id="1.1.1.86" evidence="1"/>
<dbReference type="EMBL" id="CP000969">
    <property type="protein sequence ID" value="ACB08743.1"/>
    <property type="molecule type" value="Genomic_DNA"/>
</dbReference>
<dbReference type="RefSeq" id="WP_004081338.1">
    <property type="nucleotide sequence ID" value="NC_010483.1"/>
</dbReference>
<dbReference type="SMR" id="B1L8U5"/>
<dbReference type="KEGG" id="trq:TRQ2_0387"/>
<dbReference type="HOGENOM" id="CLU_033821_0_1_0"/>
<dbReference type="UniPathway" id="UPA00047">
    <property type="reaction ID" value="UER00056"/>
</dbReference>
<dbReference type="UniPathway" id="UPA00049">
    <property type="reaction ID" value="UER00060"/>
</dbReference>
<dbReference type="Proteomes" id="UP000001687">
    <property type="component" value="Chromosome"/>
</dbReference>
<dbReference type="GO" id="GO:0005829">
    <property type="term" value="C:cytosol"/>
    <property type="evidence" value="ECO:0007669"/>
    <property type="project" value="TreeGrafter"/>
</dbReference>
<dbReference type="GO" id="GO:0004455">
    <property type="term" value="F:ketol-acid reductoisomerase activity"/>
    <property type="evidence" value="ECO:0007669"/>
    <property type="project" value="UniProtKB-UniRule"/>
</dbReference>
<dbReference type="GO" id="GO:0000287">
    <property type="term" value="F:magnesium ion binding"/>
    <property type="evidence" value="ECO:0007669"/>
    <property type="project" value="UniProtKB-UniRule"/>
</dbReference>
<dbReference type="GO" id="GO:0050661">
    <property type="term" value="F:NADP binding"/>
    <property type="evidence" value="ECO:0007669"/>
    <property type="project" value="InterPro"/>
</dbReference>
<dbReference type="GO" id="GO:0009097">
    <property type="term" value="P:isoleucine biosynthetic process"/>
    <property type="evidence" value="ECO:0007669"/>
    <property type="project" value="UniProtKB-UniRule"/>
</dbReference>
<dbReference type="GO" id="GO:0009099">
    <property type="term" value="P:L-valine biosynthetic process"/>
    <property type="evidence" value="ECO:0007669"/>
    <property type="project" value="UniProtKB-UniRule"/>
</dbReference>
<dbReference type="FunFam" id="3.40.50.720:FF:000023">
    <property type="entry name" value="Ketol-acid reductoisomerase (NADP(+))"/>
    <property type="match status" value="1"/>
</dbReference>
<dbReference type="Gene3D" id="6.10.240.10">
    <property type="match status" value="1"/>
</dbReference>
<dbReference type="Gene3D" id="3.40.50.720">
    <property type="entry name" value="NAD(P)-binding Rossmann-like Domain"/>
    <property type="match status" value="1"/>
</dbReference>
<dbReference type="HAMAP" id="MF_00435">
    <property type="entry name" value="IlvC"/>
    <property type="match status" value="1"/>
</dbReference>
<dbReference type="InterPro" id="IPR008927">
    <property type="entry name" value="6-PGluconate_DH-like_C_sf"/>
</dbReference>
<dbReference type="InterPro" id="IPR013023">
    <property type="entry name" value="KARI"/>
</dbReference>
<dbReference type="InterPro" id="IPR000506">
    <property type="entry name" value="KARI_C"/>
</dbReference>
<dbReference type="InterPro" id="IPR013116">
    <property type="entry name" value="KARI_N"/>
</dbReference>
<dbReference type="InterPro" id="IPR014359">
    <property type="entry name" value="KARI_prok"/>
</dbReference>
<dbReference type="InterPro" id="IPR036291">
    <property type="entry name" value="NAD(P)-bd_dom_sf"/>
</dbReference>
<dbReference type="NCBIfam" id="TIGR00465">
    <property type="entry name" value="ilvC"/>
    <property type="match status" value="1"/>
</dbReference>
<dbReference type="NCBIfam" id="NF004017">
    <property type="entry name" value="PRK05479.1"/>
    <property type="match status" value="1"/>
</dbReference>
<dbReference type="NCBIfam" id="NF009940">
    <property type="entry name" value="PRK13403.1"/>
    <property type="match status" value="1"/>
</dbReference>
<dbReference type="PANTHER" id="PTHR21371">
    <property type="entry name" value="KETOL-ACID REDUCTOISOMERASE, MITOCHONDRIAL"/>
    <property type="match status" value="1"/>
</dbReference>
<dbReference type="PANTHER" id="PTHR21371:SF1">
    <property type="entry name" value="KETOL-ACID REDUCTOISOMERASE, MITOCHONDRIAL"/>
    <property type="match status" value="1"/>
</dbReference>
<dbReference type="Pfam" id="PF01450">
    <property type="entry name" value="KARI_C"/>
    <property type="match status" value="1"/>
</dbReference>
<dbReference type="Pfam" id="PF07991">
    <property type="entry name" value="KARI_N"/>
    <property type="match status" value="1"/>
</dbReference>
<dbReference type="PIRSF" id="PIRSF000116">
    <property type="entry name" value="IlvC_gammaproteo"/>
    <property type="match status" value="1"/>
</dbReference>
<dbReference type="SUPFAM" id="SSF48179">
    <property type="entry name" value="6-phosphogluconate dehydrogenase C-terminal domain-like"/>
    <property type="match status" value="1"/>
</dbReference>
<dbReference type="SUPFAM" id="SSF51735">
    <property type="entry name" value="NAD(P)-binding Rossmann-fold domains"/>
    <property type="match status" value="1"/>
</dbReference>
<dbReference type="PROSITE" id="PS51851">
    <property type="entry name" value="KARI_C"/>
    <property type="match status" value="1"/>
</dbReference>
<dbReference type="PROSITE" id="PS51850">
    <property type="entry name" value="KARI_N"/>
    <property type="match status" value="1"/>
</dbReference>
<sequence length="336" mass="38047">MAVIYYDKDADLNLIKDKKIAIIGYGSQGHAHALNLKDSGLNVVVGLREGSKSWKKAEEQGLTVKTIEEAAKEADIIMILIPDEHQPEIYKKYIEKHLTEGKMLMFAHGFNIHYHQIIPPKNVDVTMIAPKSPGHIVRREYVEGRGVPALVAVYQDYTGKAKDIALAYAKGIGVTRAGVIETTFKEETETDLFGEQAVLCGGVTALIKAGFETLVDAGYQPEIAYFECLNELKLIVDLIYEGGLSFMRYSVSNTAEYGDYISQEKIVTKEVRENMKQMLKDIQTGKFAKDWILENQAGRPYFYTMRKKESEHLIEKVGKELRKMMPWLKERNVDEE</sequence>
<reference key="1">
    <citation type="journal article" date="2011" name="J. Bacteriol.">
        <title>Genome sequence of Thermotoga sp. strain RQ2, a hyperthermophilic bacterium isolated from a geothermally heated region of the seafloor near Ribeira Quente, the Azores.</title>
        <authorList>
            <person name="Swithers K.S."/>
            <person name="DiPippo J.L."/>
            <person name="Bruce D.C."/>
            <person name="Detter C."/>
            <person name="Tapia R."/>
            <person name="Han S."/>
            <person name="Saunders E."/>
            <person name="Goodwin L.A."/>
            <person name="Han J."/>
            <person name="Woyke T."/>
            <person name="Pitluck S."/>
            <person name="Pennacchio L."/>
            <person name="Nolan M."/>
            <person name="Mikhailova N."/>
            <person name="Lykidis A."/>
            <person name="Land M.L."/>
            <person name="Brettin T."/>
            <person name="Stetter K.O."/>
            <person name="Nelson K.E."/>
            <person name="Gogarten J.P."/>
            <person name="Noll K.M."/>
        </authorList>
    </citation>
    <scope>NUCLEOTIDE SEQUENCE [LARGE SCALE GENOMIC DNA]</scope>
    <source>
        <strain>RQ2</strain>
    </source>
</reference>
<accession>B1L8U5</accession>
<protein>
    <recommendedName>
        <fullName evidence="1">Ketol-acid reductoisomerase (NADP(+))</fullName>
        <shortName evidence="1">KARI</shortName>
        <ecNumber evidence="1">1.1.1.86</ecNumber>
    </recommendedName>
    <alternativeName>
        <fullName evidence="1">Acetohydroxy-acid isomeroreductase</fullName>
        <shortName evidence="1">AHIR</shortName>
    </alternativeName>
    <alternativeName>
        <fullName evidence="1">Alpha-keto-beta-hydroxylacyl reductoisomerase</fullName>
    </alternativeName>
    <alternativeName>
        <fullName evidence="1">Ketol-acid reductoisomerase type 1</fullName>
    </alternativeName>
    <alternativeName>
        <fullName evidence="1">Ketol-acid reductoisomerase type I</fullName>
    </alternativeName>
</protein>
<name>ILVC_THESQ</name>
<keyword id="KW-0028">Amino-acid biosynthesis</keyword>
<keyword id="KW-0100">Branched-chain amino acid biosynthesis</keyword>
<keyword id="KW-0460">Magnesium</keyword>
<keyword id="KW-0479">Metal-binding</keyword>
<keyword id="KW-0521">NADP</keyword>
<keyword id="KW-0560">Oxidoreductase</keyword>
<comment type="function">
    <text evidence="1">Involved in the biosynthesis of branched-chain amino acids (BCAA). Catalyzes an alkyl-migration followed by a ketol-acid reduction of (S)-2-acetolactate (S2AL) to yield (R)-2,3-dihydroxy-isovalerate. In the isomerase reaction, S2AL is rearranged via a Mg-dependent methyl migration to produce 3-hydroxy-3-methyl-2-ketobutyrate (HMKB). In the reductase reaction, this 2-ketoacid undergoes a metal-dependent reduction by NADPH to yield (R)-2,3-dihydroxy-isovalerate.</text>
</comment>
<comment type="catalytic activity">
    <reaction evidence="1">
        <text>(2R)-2,3-dihydroxy-3-methylbutanoate + NADP(+) = (2S)-2-acetolactate + NADPH + H(+)</text>
        <dbReference type="Rhea" id="RHEA:22068"/>
        <dbReference type="ChEBI" id="CHEBI:15378"/>
        <dbReference type="ChEBI" id="CHEBI:49072"/>
        <dbReference type="ChEBI" id="CHEBI:57783"/>
        <dbReference type="ChEBI" id="CHEBI:58349"/>
        <dbReference type="ChEBI" id="CHEBI:58476"/>
        <dbReference type="EC" id="1.1.1.86"/>
    </reaction>
</comment>
<comment type="catalytic activity">
    <reaction evidence="1">
        <text>(2R,3R)-2,3-dihydroxy-3-methylpentanoate + NADP(+) = (S)-2-ethyl-2-hydroxy-3-oxobutanoate + NADPH + H(+)</text>
        <dbReference type="Rhea" id="RHEA:13493"/>
        <dbReference type="ChEBI" id="CHEBI:15378"/>
        <dbReference type="ChEBI" id="CHEBI:49256"/>
        <dbReference type="ChEBI" id="CHEBI:49258"/>
        <dbReference type="ChEBI" id="CHEBI:57783"/>
        <dbReference type="ChEBI" id="CHEBI:58349"/>
        <dbReference type="EC" id="1.1.1.86"/>
    </reaction>
</comment>
<comment type="cofactor">
    <cofactor evidence="1">
        <name>Mg(2+)</name>
        <dbReference type="ChEBI" id="CHEBI:18420"/>
    </cofactor>
    <text evidence="1">Binds 2 magnesium ions per subunit.</text>
</comment>
<comment type="pathway">
    <text evidence="1">Amino-acid biosynthesis; L-isoleucine biosynthesis; L-isoleucine from 2-oxobutanoate: step 2/4.</text>
</comment>
<comment type="pathway">
    <text evidence="1">Amino-acid biosynthesis; L-valine biosynthesis; L-valine from pyruvate: step 2/4.</text>
</comment>
<comment type="similarity">
    <text evidence="1">Belongs to the ketol-acid reductoisomerase family.</text>
</comment>
<organism>
    <name type="scientific">Thermotoga sp. (strain RQ2)</name>
    <dbReference type="NCBI Taxonomy" id="126740"/>
    <lineage>
        <taxon>Bacteria</taxon>
        <taxon>Thermotogati</taxon>
        <taxon>Thermotogota</taxon>
        <taxon>Thermotogae</taxon>
        <taxon>Thermotogales</taxon>
        <taxon>Thermotogaceae</taxon>
        <taxon>Thermotoga</taxon>
    </lineage>
</organism>
<feature type="chain" id="PRO_1000191012" description="Ketol-acid reductoisomerase (NADP(+))">
    <location>
        <begin position="1"/>
        <end position="336"/>
    </location>
</feature>
<feature type="domain" description="KARI N-terminal Rossmann" evidence="2">
    <location>
        <begin position="1"/>
        <end position="182"/>
    </location>
</feature>
<feature type="domain" description="KARI C-terminal knotted" evidence="3">
    <location>
        <begin position="183"/>
        <end position="328"/>
    </location>
</feature>
<feature type="active site" evidence="1">
    <location>
        <position position="108"/>
    </location>
</feature>
<feature type="binding site" evidence="1">
    <location>
        <begin position="25"/>
        <end position="28"/>
    </location>
    <ligand>
        <name>NADP(+)</name>
        <dbReference type="ChEBI" id="CHEBI:58349"/>
    </ligand>
</feature>
<feature type="binding site" evidence="1">
    <location>
        <position position="48"/>
    </location>
    <ligand>
        <name>NADP(+)</name>
        <dbReference type="ChEBI" id="CHEBI:58349"/>
    </ligand>
</feature>
<feature type="binding site" evidence="1">
    <location>
        <position position="51"/>
    </location>
    <ligand>
        <name>NADP(+)</name>
        <dbReference type="ChEBI" id="CHEBI:58349"/>
    </ligand>
</feature>
<feature type="binding site" evidence="1">
    <location>
        <position position="53"/>
    </location>
    <ligand>
        <name>NADP(+)</name>
        <dbReference type="ChEBI" id="CHEBI:58349"/>
    </ligand>
</feature>
<feature type="binding site" evidence="1">
    <location>
        <begin position="83"/>
        <end position="86"/>
    </location>
    <ligand>
        <name>NADP(+)</name>
        <dbReference type="ChEBI" id="CHEBI:58349"/>
    </ligand>
</feature>
<feature type="binding site" evidence="1">
    <location>
        <position position="134"/>
    </location>
    <ligand>
        <name>NADP(+)</name>
        <dbReference type="ChEBI" id="CHEBI:58349"/>
    </ligand>
</feature>
<feature type="binding site" evidence="1">
    <location>
        <position position="191"/>
    </location>
    <ligand>
        <name>Mg(2+)</name>
        <dbReference type="ChEBI" id="CHEBI:18420"/>
        <label>1</label>
    </ligand>
</feature>
<feature type="binding site" evidence="1">
    <location>
        <position position="191"/>
    </location>
    <ligand>
        <name>Mg(2+)</name>
        <dbReference type="ChEBI" id="CHEBI:18420"/>
        <label>2</label>
    </ligand>
</feature>
<feature type="binding site" evidence="1">
    <location>
        <position position="195"/>
    </location>
    <ligand>
        <name>Mg(2+)</name>
        <dbReference type="ChEBI" id="CHEBI:18420"/>
        <label>1</label>
    </ligand>
</feature>
<feature type="binding site" evidence="1">
    <location>
        <position position="227"/>
    </location>
    <ligand>
        <name>Mg(2+)</name>
        <dbReference type="ChEBI" id="CHEBI:18420"/>
        <label>2</label>
    </ligand>
</feature>
<feature type="binding site" evidence="1">
    <location>
        <position position="231"/>
    </location>
    <ligand>
        <name>Mg(2+)</name>
        <dbReference type="ChEBI" id="CHEBI:18420"/>
        <label>2</label>
    </ligand>
</feature>
<feature type="binding site" evidence="1">
    <location>
        <position position="252"/>
    </location>
    <ligand>
        <name>substrate</name>
    </ligand>
</feature>
<proteinExistence type="inferred from homology"/>